<organism>
    <name type="scientific">Nicotiana tabacum</name>
    <name type="common">Common tobacco</name>
    <dbReference type="NCBI Taxonomy" id="4097"/>
    <lineage>
        <taxon>Eukaryota</taxon>
        <taxon>Viridiplantae</taxon>
        <taxon>Streptophyta</taxon>
        <taxon>Embryophyta</taxon>
        <taxon>Tracheophyta</taxon>
        <taxon>Spermatophyta</taxon>
        <taxon>Magnoliopsida</taxon>
        <taxon>eudicotyledons</taxon>
        <taxon>Gunneridae</taxon>
        <taxon>Pentapetalae</taxon>
        <taxon>asterids</taxon>
        <taxon>lamiids</taxon>
        <taxon>Solanales</taxon>
        <taxon>Solanaceae</taxon>
        <taxon>Nicotianoideae</taxon>
        <taxon>Nicotianeae</taxon>
        <taxon>Nicotiana</taxon>
    </lineage>
</organism>
<comment type="catalytic activity">
    <reaction>
        <text>O-phospho-L-seryl-[protein] + H2O = L-seryl-[protein] + phosphate</text>
        <dbReference type="Rhea" id="RHEA:20629"/>
        <dbReference type="Rhea" id="RHEA-COMP:9863"/>
        <dbReference type="Rhea" id="RHEA-COMP:11604"/>
        <dbReference type="ChEBI" id="CHEBI:15377"/>
        <dbReference type="ChEBI" id="CHEBI:29999"/>
        <dbReference type="ChEBI" id="CHEBI:43474"/>
        <dbReference type="ChEBI" id="CHEBI:83421"/>
        <dbReference type="EC" id="3.1.3.16"/>
    </reaction>
</comment>
<comment type="catalytic activity">
    <reaction>
        <text>O-phospho-L-threonyl-[protein] + H2O = L-threonyl-[protein] + phosphate</text>
        <dbReference type="Rhea" id="RHEA:47004"/>
        <dbReference type="Rhea" id="RHEA-COMP:11060"/>
        <dbReference type="Rhea" id="RHEA-COMP:11605"/>
        <dbReference type="ChEBI" id="CHEBI:15377"/>
        <dbReference type="ChEBI" id="CHEBI:30013"/>
        <dbReference type="ChEBI" id="CHEBI:43474"/>
        <dbReference type="ChEBI" id="CHEBI:61977"/>
        <dbReference type="EC" id="3.1.3.16"/>
    </reaction>
</comment>
<comment type="cofactor">
    <cofactor evidence="1">
        <name>Mn(2+)</name>
        <dbReference type="ChEBI" id="CHEBI:29035"/>
    </cofactor>
    <text evidence="1">Binds 2 manganese ions per subunit.</text>
</comment>
<comment type="similarity">
    <text evidence="2">Belongs to the PPP phosphatase family. PP-1 subfamily.</text>
</comment>
<name>PP11_TOBAC</name>
<evidence type="ECO:0000250" key="1"/>
<evidence type="ECO:0000305" key="2"/>
<gene>
    <name type="primary">NPP1</name>
</gene>
<protein>
    <recommendedName>
        <fullName>Serine/threonine-protein phosphatase PP1 isozyme 1</fullName>
        <ecNumber>3.1.3.16</ecNumber>
    </recommendedName>
</protein>
<feature type="chain" id="PRO_0000058811" description="Serine/threonine-protein phosphatase PP1 isozyme 1">
    <location>
        <begin position="1"/>
        <end position="317"/>
    </location>
</feature>
<feature type="active site" description="Proton donor" evidence="1">
    <location>
        <position position="136"/>
    </location>
</feature>
<feature type="binding site" evidence="1">
    <location>
        <position position="75"/>
    </location>
    <ligand>
        <name>Mn(2+)</name>
        <dbReference type="ChEBI" id="CHEBI:29035"/>
        <label>1</label>
    </ligand>
</feature>
<feature type="binding site" evidence="1">
    <location>
        <position position="77"/>
    </location>
    <ligand>
        <name>Mn(2+)</name>
        <dbReference type="ChEBI" id="CHEBI:29035"/>
        <label>1</label>
    </ligand>
</feature>
<feature type="binding site" evidence="1">
    <location>
        <position position="103"/>
    </location>
    <ligand>
        <name>Mn(2+)</name>
        <dbReference type="ChEBI" id="CHEBI:29035"/>
        <label>1</label>
    </ligand>
</feature>
<feature type="binding site" evidence="1">
    <location>
        <position position="103"/>
    </location>
    <ligand>
        <name>Mn(2+)</name>
        <dbReference type="ChEBI" id="CHEBI:29035"/>
        <label>2</label>
    </ligand>
</feature>
<feature type="binding site" evidence="1">
    <location>
        <position position="135"/>
    </location>
    <ligand>
        <name>Mn(2+)</name>
        <dbReference type="ChEBI" id="CHEBI:29035"/>
        <label>2</label>
    </ligand>
</feature>
<feature type="binding site" evidence="1">
    <location>
        <position position="184"/>
    </location>
    <ligand>
        <name>Mn(2+)</name>
        <dbReference type="ChEBI" id="CHEBI:29035"/>
        <label>2</label>
    </ligand>
</feature>
<feature type="binding site" evidence="1">
    <location>
        <position position="259"/>
    </location>
    <ligand>
        <name>Mn(2+)</name>
        <dbReference type="ChEBI" id="CHEBI:29035"/>
        <label>2</label>
    </ligand>
</feature>
<sequence length="317" mass="36266">MAQNNEQQQQGQGLIEAGVLDDIINRLLEFRNARTVRQVQLSEAEIRSLCSASREIFLQQPNLLDLKPPIKICGDIHGQYGDLLRLFEYGGFPPEANYLFLGDYVDRGKQSLETICLLLAYKIKYPENFFLLRGNHECASINRIYGFYDECKRRFNVKLWKCFTECFNCLPVAALIDEKILCMHGGLSPVLTNLDQIRNLPRPTDVPDSGLLCDLLWSDPSREVKGWGMNDRGVSYTFGPDKVAEFLMQHDMDLVCRAHQVVEDGYEFFAERQLVTIFSAPNYCGEFDNAGAMMSVDESLMCSFQILKPTDRKPRFL</sequence>
<dbReference type="EC" id="3.1.3.16"/>
<dbReference type="EMBL" id="Z93768">
    <property type="protein sequence ID" value="CAB07803.1"/>
    <property type="molecule type" value="mRNA"/>
</dbReference>
<dbReference type="PIR" id="T03594">
    <property type="entry name" value="T03594"/>
</dbReference>
<dbReference type="RefSeq" id="NP_001311560.1">
    <property type="nucleotide sequence ID" value="NM_001324631.1"/>
</dbReference>
<dbReference type="SMR" id="O04856"/>
<dbReference type="STRING" id="4097.O04856"/>
<dbReference type="PaxDb" id="4097-O04856"/>
<dbReference type="GeneID" id="107759089"/>
<dbReference type="KEGG" id="nta:107759089"/>
<dbReference type="OrthoDB" id="1930084at2759"/>
<dbReference type="Proteomes" id="UP000084051">
    <property type="component" value="Unplaced"/>
</dbReference>
<dbReference type="GO" id="GO:0005737">
    <property type="term" value="C:cytoplasm"/>
    <property type="evidence" value="ECO:0000318"/>
    <property type="project" value="GO_Central"/>
</dbReference>
<dbReference type="GO" id="GO:0005634">
    <property type="term" value="C:nucleus"/>
    <property type="evidence" value="ECO:0000318"/>
    <property type="project" value="GO_Central"/>
</dbReference>
<dbReference type="GO" id="GO:0046872">
    <property type="term" value="F:metal ion binding"/>
    <property type="evidence" value="ECO:0007669"/>
    <property type="project" value="UniProtKB-KW"/>
</dbReference>
<dbReference type="GO" id="GO:0004722">
    <property type="term" value="F:protein serine/threonine phosphatase activity"/>
    <property type="evidence" value="ECO:0000318"/>
    <property type="project" value="GO_Central"/>
</dbReference>
<dbReference type="CDD" id="cd07414">
    <property type="entry name" value="MPP_PP1_PPKL"/>
    <property type="match status" value="1"/>
</dbReference>
<dbReference type="FunFam" id="3.60.21.10:FF:000212">
    <property type="entry name" value="Serine/threonine-protein phosphatase"/>
    <property type="match status" value="1"/>
</dbReference>
<dbReference type="Gene3D" id="3.60.21.10">
    <property type="match status" value="1"/>
</dbReference>
<dbReference type="InterPro" id="IPR004843">
    <property type="entry name" value="Calcineurin-like_PHP_ApaH"/>
</dbReference>
<dbReference type="InterPro" id="IPR029052">
    <property type="entry name" value="Metallo-depent_PP-like"/>
</dbReference>
<dbReference type="InterPro" id="IPR050341">
    <property type="entry name" value="PP1_catalytic_subunit"/>
</dbReference>
<dbReference type="InterPro" id="IPR006186">
    <property type="entry name" value="Ser/Thr-sp_prot-phosphatase"/>
</dbReference>
<dbReference type="InterPro" id="IPR031675">
    <property type="entry name" value="STPPase_N"/>
</dbReference>
<dbReference type="PANTHER" id="PTHR11668">
    <property type="entry name" value="SERINE/THREONINE PROTEIN PHOSPHATASE"/>
    <property type="match status" value="1"/>
</dbReference>
<dbReference type="PANTHER" id="PTHR11668:SF427">
    <property type="entry name" value="SERINE_THREONINE-PROTEIN PHOSPHATASE PP1 ISOZYME 1"/>
    <property type="match status" value="1"/>
</dbReference>
<dbReference type="Pfam" id="PF00149">
    <property type="entry name" value="Metallophos"/>
    <property type="match status" value="1"/>
</dbReference>
<dbReference type="Pfam" id="PF16891">
    <property type="entry name" value="STPPase_N"/>
    <property type="match status" value="1"/>
</dbReference>
<dbReference type="PRINTS" id="PR00114">
    <property type="entry name" value="STPHPHTASE"/>
</dbReference>
<dbReference type="SMART" id="SM00156">
    <property type="entry name" value="PP2Ac"/>
    <property type="match status" value="1"/>
</dbReference>
<dbReference type="SUPFAM" id="SSF56300">
    <property type="entry name" value="Metallo-dependent phosphatases"/>
    <property type="match status" value="1"/>
</dbReference>
<dbReference type="PROSITE" id="PS00125">
    <property type="entry name" value="SER_THR_PHOSPHATASE"/>
    <property type="match status" value="1"/>
</dbReference>
<accession>O04856</accession>
<proteinExistence type="evidence at transcript level"/>
<reference key="1">
    <citation type="journal article" date="1998" name="Plant Mol. Biol.">
        <title>Multiple genes encoding serine/threonine protein phosphatases and their differential expression in Nicotiana tabacum.</title>
        <authorList>
            <person name="Suh M."/>
            <person name="Cho H."/>
            <person name="Kim Y."/>
            <person name="Liu J."/>
            <person name="Lee H."/>
        </authorList>
    </citation>
    <scope>NUCLEOTIDE SEQUENCE [MRNA]</scope>
    <source>
        <strain>cv. Xanthi</strain>
    </source>
</reference>
<keyword id="KW-0378">Hydrolase</keyword>
<keyword id="KW-0464">Manganese</keyword>
<keyword id="KW-0479">Metal-binding</keyword>
<keyword id="KW-0904">Protein phosphatase</keyword>
<keyword id="KW-1185">Reference proteome</keyword>